<sequence>MTIISDSQIVVALISALVTGILALRLGRELYR</sequence>
<reference key="1">
    <citation type="journal article" date="2005" name="BMC Biol.">
        <title>The complete chloroplast DNA sequences of the charophycean green algae Staurastrum and Zygnema reveal that the chloroplast genome underwent extensive changes during the evolution of the Zygnematales.</title>
        <authorList>
            <person name="Turmel M."/>
            <person name="Otis C."/>
            <person name="Lemieux C."/>
        </authorList>
    </citation>
    <scope>NUCLEOTIDE SEQUENCE [LARGE SCALE GENOMIC DNA]</scope>
</reference>
<evidence type="ECO:0000255" key="1">
    <source>
        <dbReference type="HAMAP-Rule" id="MF_00828"/>
    </source>
</evidence>
<gene>
    <name evidence="1" type="primary">psaM</name>
</gene>
<keyword id="KW-0150">Chloroplast</keyword>
<keyword id="KW-0472">Membrane</keyword>
<keyword id="KW-0602">Photosynthesis</keyword>
<keyword id="KW-0603">Photosystem I</keyword>
<keyword id="KW-0934">Plastid</keyword>
<keyword id="KW-0793">Thylakoid</keyword>
<keyword id="KW-0812">Transmembrane</keyword>
<keyword id="KW-1133">Transmembrane helix</keyword>
<proteinExistence type="inferred from homology"/>
<comment type="subcellular location">
    <subcellularLocation>
        <location evidence="1">Plastid</location>
        <location evidence="1">Chloroplast thylakoid membrane</location>
        <topology evidence="1">Single-pass membrane protein</topology>
    </subcellularLocation>
</comment>
<comment type="similarity">
    <text evidence="1">Belongs to the PsaM family.</text>
</comment>
<feature type="chain" id="PRO_0000277400" description="Photosystem I reaction center subunit XII">
    <location>
        <begin position="1"/>
        <end position="32"/>
    </location>
</feature>
<feature type="transmembrane region" description="Helical" evidence="1">
    <location>
        <begin position="10"/>
        <end position="27"/>
    </location>
</feature>
<organism>
    <name type="scientific">Zygnema circumcarinatum</name>
    <name type="common">Green alga</name>
    <dbReference type="NCBI Taxonomy" id="35869"/>
    <lineage>
        <taxon>Eukaryota</taxon>
        <taxon>Viridiplantae</taxon>
        <taxon>Streptophyta</taxon>
        <taxon>Zygnematophyceae</taxon>
        <taxon>Zygnematophycidae</taxon>
        <taxon>Zygnematales</taxon>
        <taxon>Zygnemataceae</taxon>
        <taxon>Zygnema</taxon>
    </lineage>
</organism>
<dbReference type="EMBL" id="AY958086">
    <property type="protein sequence ID" value="AAX45835.1"/>
    <property type="molecule type" value="Genomic_DNA"/>
</dbReference>
<dbReference type="RefSeq" id="YP_636514.1">
    <property type="nucleotide sequence ID" value="NC_008117.1"/>
</dbReference>
<dbReference type="SMR" id="Q32RL2"/>
<dbReference type="GeneID" id="4108155"/>
<dbReference type="GO" id="GO:0009535">
    <property type="term" value="C:chloroplast thylakoid membrane"/>
    <property type="evidence" value="ECO:0007669"/>
    <property type="project" value="UniProtKB-SubCell"/>
</dbReference>
<dbReference type="GO" id="GO:0009522">
    <property type="term" value="C:photosystem I"/>
    <property type="evidence" value="ECO:0007669"/>
    <property type="project" value="UniProtKB-KW"/>
</dbReference>
<dbReference type="GO" id="GO:0015979">
    <property type="term" value="P:photosynthesis"/>
    <property type="evidence" value="ECO:0007669"/>
    <property type="project" value="UniProtKB-UniRule"/>
</dbReference>
<dbReference type="HAMAP" id="MF_00828">
    <property type="entry name" value="PSI_PsaM"/>
    <property type="match status" value="1"/>
</dbReference>
<dbReference type="InterPro" id="IPR010010">
    <property type="entry name" value="PSI_PsaM"/>
</dbReference>
<dbReference type="InterPro" id="IPR037279">
    <property type="entry name" value="PSI_PsaM_sf"/>
</dbReference>
<dbReference type="NCBIfam" id="TIGR03053">
    <property type="entry name" value="PS_I_psaM"/>
    <property type="match status" value="1"/>
</dbReference>
<dbReference type="Pfam" id="PF07465">
    <property type="entry name" value="PsaM"/>
    <property type="match status" value="1"/>
</dbReference>
<dbReference type="SUPFAM" id="SSF81548">
    <property type="entry name" value="Subunit XII of photosystem I reaction centre, PsaM"/>
    <property type="match status" value="1"/>
</dbReference>
<geneLocation type="chloroplast"/>
<accession>Q32RL2</accession>
<protein>
    <recommendedName>
        <fullName evidence="1">Photosystem I reaction center subunit XII</fullName>
    </recommendedName>
    <alternativeName>
        <fullName evidence="1">PSI-M</fullName>
    </alternativeName>
</protein>
<name>PSAM_ZYGCR</name>